<organism>
    <name type="scientific">Puntigrus tetrazona</name>
    <name type="common">Sumatra barb</name>
    <name type="synonym">Puntius tetrazona</name>
    <dbReference type="NCBI Taxonomy" id="1606681"/>
    <lineage>
        <taxon>Eukaryota</taxon>
        <taxon>Metazoa</taxon>
        <taxon>Chordata</taxon>
        <taxon>Craniata</taxon>
        <taxon>Vertebrata</taxon>
        <taxon>Euteleostomi</taxon>
        <taxon>Actinopterygii</taxon>
        <taxon>Neopterygii</taxon>
        <taxon>Teleostei</taxon>
        <taxon>Ostariophysi</taxon>
        <taxon>Cypriniformes</taxon>
        <taxon>Cyprinidae</taxon>
        <taxon>Smiliogastrinae</taxon>
        <taxon>Puntigrus</taxon>
    </lineage>
</organism>
<dbReference type="EMBL" id="U51389">
    <property type="protein sequence ID" value="AAB38614.1"/>
    <property type="molecule type" value="Genomic_DNA"/>
</dbReference>
<dbReference type="SMR" id="P79853"/>
<dbReference type="GO" id="GO:0005615">
    <property type="term" value="C:extracellular space"/>
    <property type="evidence" value="ECO:0007669"/>
    <property type="project" value="TreeGrafter"/>
</dbReference>
<dbReference type="GO" id="GO:0005886">
    <property type="term" value="C:plasma membrane"/>
    <property type="evidence" value="ECO:0007669"/>
    <property type="project" value="UniProtKB-SubCell"/>
</dbReference>
<dbReference type="GO" id="GO:0005509">
    <property type="term" value="F:calcium ion binding"/>
    <property type="evidence" value="ECO:0007669"/>
    <property type="project" value="TreeGrafter"/>
</dbReference>
<dbReference type="GO" id="GO:0005113">
    <property type="term" value="F:patched binding"/>
    <property type="evidence" value="ECO:0007669"/>
    <property type="project" value="TreeGrafter"/>
</dbReference>
<dbReference type="GO" id="GO:0008233">
    <property type="term" value="F:peptidase activity"/>
    <property type="evidence" value="ECO:0007669"/>
    <property type="project" value="UniProtKB-KW"/>
</dbReference>
<dbReference type="GO" id="GO:0001708">
    <property type="term" value="P:cell fate specification"/>
    <property type="evidence" value="ECO:0007669"/>
    <property type="project" value="TreeGrafter"/>
</dbReference>
<dbReference type="GO" id="GO:0007267">
    <property type="term" value="P:cell-cell signaling"/>
    <property type="evidence" value="ECO:0007669"/>
    <property type="project" value="InterPro"/>
</dbReference>
<dbReference type="GO" id="GO:0006508">
    <property type="term" value="P:proteolysis"/>
    <property type="evidence" value="ECO:0007669"/>
    <property type="project" value="UniProtKB-KW"/>
</dbReference>
<dbReference type="GO" id="GO:0010468">
    <property type="term" value="P:regulation of gene expression"/>
    <property type="evidence" value="ECO:0007669"/>
    <property type="project" value="TreeGrafter"/>
</dbReference>
<dbReference type="GO" id="GO:0007224">
    <property type="term" value="P:smoothened signaling pathway"/>
    <property type="evidence" value="ECO:0007669"/>
    <property type="project" value="TreeGrafter"/>
</dbReference>
<dbReference type="Gene3D" id="3.30.1380.10">
    <property type="match status" value="1"/>
</dbReference>
<dbReference type="InterPro" id="IPR001657">
    <property type="entry name" value="Hedgehog"/>
</dbReference>
<dbReference type="InterPro" id="IPR009045">
    <property type="entry name" value="Hedgehog_sig/DD-Pept_Zn-bd_sf"/>
</dbReference>
<dbReference type="InterPro" id="IPR050387">
    <property type="entry name" value="Hedgehog_Signaling"/>
</dbReference>
<dbReference type="InterPro" id="IPR000320">
    <property type="entry name" value="Hedgehog_signalling_dom"/>
</dbReference>
<dbReference type="PANTHER" id="PTHR11889">
    <property type="entry name" value="HEDGEHOG"/>
    <property type="match status" value="1"/>
</dbReference>
<dbReference type="PANTHER" id="PTHR11889:SF39">
    <property type="entry name" value="INDIAN HEDGEHOG PROTEIN"/>
    <property type="match status" value="1"/>
</dbReference>
<dbReference type="Pfam" id="PF01085">
    <property type="entry name" value="HH_signal"/>
    <property type="match status" value="1"/>
</dbReference>
<dbReference type="PRINTS" id="PR00632">
    <property type="entry name" value="SONICHHOG"/>
</dbReference>
<dbReference type="SUPFAM" id="SSF55166">
    <property type="entry name" value="Hedgehog/DD-peptidase"/>
    <property type="match status" value="1"/>
</dbReference>
<name>DHH_PUNTE</name>
<reference key="1">
    <citation type="journal article" date="1996" name="Proc. Natl. Acad. Sci. U.S.A.">
        <title>Evolutionary analyses of hedgehog and Hoxd-10 genes in fish species closely related to the zebrafish.</title>
        <authorList>
            <person name="Zardoya R."/>
            <person name="Abouheif E."/>
            <person name="Meyer A."/>
        </authorList>
    </citation>
    <scope>NUCLEOTIDE SEQUENCE [GENOMIC DNA]</scope>
    <source>
        <tissue>Muscle</tissue>
    </source>
</reference>
<gene>
    <name type="primary">dhh</name>
</gene>
<proteinExistence type="inferred from homology"/>
<keyword id="KW-0068">Autocatalytic cleavage</keyword>
<keyword id="KW-0106">Calcium</keyword>
<keyword id="KW-1003">Cell membrane</keyword>
<keyword id="KW-0217">Developmental protein</keyword>
<keyword id="KW-0378">Hydrolase</keyword>
<keyword id="KW-0472">Membrane</keyword>
<keyword id="KW-0479">Metal-binding</keyword>
<keyword id="KW-0645">Protease</keyword>
<keyword id="KW-0964">Secreted</keyword>
<keyword id="KW-0862">Zinc</keyword>
<evidence type="ECO:0000250" key="1"/>
<evidence type="ECO:0000250" key="2">
    <source>
        <dbReference type="UniProtKB" id="O43323"/>
    </source>
</evidence>
<evidence type="ECO:0000305" key="3"/>
<comment type="function">
    <text evidence="1">Intercellular signal essential for a variety of patterning events during development.</text>
</comment>
<comment type="subcellular location">
    <subcellularLocation>
        <location evidence="1">Cell membrane</location>
    </subcellularLocation>
    <subcellularLocation>
        <location evidence="1">Secreted</location>
        <location evidence="1">Extracellular space</location>
    </subcellularLocation>
    <text evidence="1">Desert hedgehog protein N-product: Cell membrane; Lipid-anchor; Extracellular side. The N-terminal peptide remains associated with the cell surface. Desert hedgehog protein C-product: Secreted, extracellular space. The C-terminal peptide diffuses from the cell.</text>
</comment>
<comment type="domain">
    <text evidence="1">The desert hedgehog protein N-product binds calcium and zinc ions; this stabilizes the protein fold and is essential for protein-protein interactions mediated by this domain.</text>
</comment>
<comment type="PTM">
    <text evidence="1">The C-terminal domain displays an autoproteolysis activity and a cholesterol transferase activity. Both activities result in the cleavage of the full-length protein and covalent attachment of a cholesterol moiety to the C-terminal of the newly generated N-terminal fragment (N-product). This covalent modification appears to play an essential role in restricting the spatial distribution of the protein activity to the cell surface. The N-product is the active species in both local and long-range signaling, whereas the C-product has no signaling activity (By similarity).</text>
</comment>
<comment type="similarity">
    <text evidence="3">Belongs to the hedgehog family.</text>
</comment>
<feature type="chain" id="PRO_0000058752" description="Desert hedgehog protein">
    <location>
        <begin position="1" status="less than"/>
        <end position="58" status="greater than"/>
    </location>
</feature>
<feature type="binding site" evidence="2">
    <location>
        <position position="13"/>
    </location>
    <ligand>
        <name>Ca(2+)</name>
        <dbReference type="ChEBI" id="CHEBI:29108"/>
        <label>1</label>
    </ligand>
</feature>
<feature type="binding site" evidence="2">
    <location>
        <position position="14"/>
    </location>
    <ligand>
        <name>Ca(2+)</name>
        <dbReference type="ChEBI" id="CHEBI:29108"/>
        <label>1</label>
    </ligand>
</feature>
<feature type="binding site" evidence="2">
    <location>
        <position position="14"/>
    </location>
    <ligand>
        <name>Ca(2+)</name>
        <dbReference type="ChEBI" id="CHEBI:29108"/>
        <label>2</label>
    </ligand>
</feature>
<feature type="binding site" evidence="2">
    <location>
        <position position="17"/>
    </location>
    <ligand>
        <name>Ca(2+)</name>
        <dbReference type="ChEBI" id="CHEBI:29108"/>
        <label>2</label>
    </ligand>
</feature>
<feature type="binding site" evidence="2">
    <location>
        <position position="19"/>
    </location>
    <ligand>
        <name>Ca(2+)</name>
        <dbReference type="ChEBI" id="CHEBI:29108"/>
        <label>2</label>
    </ligand>
</feature>
<feature type="binding site" evidence="2">
    <location>
        <position position="28"/>
    </location>
    <ligand>
        <name>Zn(2+)</name>
        <dbReference type="ChEBI" id="CHEBI:29105"/>
    </ligand>
</feature>
<feature type="binding site" evidence="2">
    <location>
        <position position="35"/>
    </location>
    <ligand>
        <name>Zn(2+)</name>
        <dbReference type="ChEBI" id="CHEBI:29105"/>
    </ligand>
</feature>
<feature type="non-terminal residue">
    <location>
        <position position="1"/>
    </location>
</feature>
<feature type="non-terminal residue">
    <location>
        <position position="58"/>
    </location>
</feature>
<accession>P79853</accession>
<protein>
    <recommendedName>
        <fullName>Desert hedgehog protein</fullName>
        <shortName>DHH</shortName>
    </recommendedName>
</protein>
<sequence>VMNMWPKVKLRVTEGWDEDGNHFEDSLHYEGRAVDITTSDRDRNKYGMLARLAVEAGF</sequence>